<sequence>MAEASQLFKEFKIQSVSEFFRRNAAMLGYTGKVRSLTTLVHEAVTNSLDACEEAGIPPYIRVEIEELGREHYKVVVEDNGPGIPEKYITHVFGKMLAGTKAHRNIQSRGQQGIGISGAVMFAQITSGKATRVITSTGDEIIEAWVKIDVDKNEGKIVKKEKHPNPDGWHGTRIELEVKNVKYMRSKQGVYWYLKLTAIANPHAHIELIEPDGKLIVFPRSSEEVPEPPVEMKPHPKGVLTDDVYRMAKKTKRQSVRRFLIGEFSRISDKKVDELIEYVAALRLIKKVGDKKVQEQLYERLMKGEVKAVLRSFRGYTKVVKQVAKMMEKPPEKLTWHEAEEIVEAFKYMKFLAPPTHGLRPIGEENIEKGLKGILKPEFVTAVTRPPKVYSGGIPFQVEVGLAYGGEIPSGFELLRYANRVPLLFDAGSCVTTQAARSIDWKRYKVDDLDRTPLVLMINVVSVHVPYTGTGKQSIASVDEIYNEIRLAIMDAARRLQTYLSGKHRRLYQVKRKKTFEKYVPEIARALSVLTGESEEKIREYFLNFIESHFASKEAVEVSENA</sequence>
<dbReference type="EC" id="5.6.2.2" evidence="1"/>
<dbReference type="EMBL" id="CP001398">
    <property type="protein sequence ID" value="ACS33927.1"/>
    <property type="molecule type" value="Genomic_DNA"/>
</dbReference>
<dbReference type="RefSeq" id="WP_015859038.1">
    <property type="nucleotide sequence ID" value="NC_012804.1"/>
</dbReference>
<dbReference type="SMR" id="C5A6R5"/>
<dbReference type="STRING" id="593117.TGAM_1425"/>
<dbReference type="PaxDb" id="593117-TGAM_1425"/>
<dbReference type="GeneID" id="7988158"/>
<dbReference type="KEGG" id="tga:TGAM_1425"/>
<dbReference type="PATRIC" id="fig|593117.10.peg.1427"/>
<dbReference type="eggNOG" id="arCOG01165">
    <property type="taxonomic scope" value="Archaea"/>
</dbReference>
<dbReference type="HOGENOM" id="CLU_006403_0_0_2"/>
<dbReference type="OrthoDB" id="65493at2157"/>
<dbReference type="Proteomes" id="UP000001488">
    <property type="component" value="Chromosome"/>
</dbReference>
<dbReference type="GO" id="GO:0005524">
    <property type="term" value="F:ATP binding"/>
    <property type="evidence" value="ECO:0007669"/>
    <property type="project" value="UniProtKB-UniRule"/>
</dbReference>
<dbReference type="GO" id="GO:0003677">
    <property type="term" value="F:DNA binding"/>
    <property type="evidence" value="ECO:0007669"/>
    <property type="project" value="UniProtKB-UniRule"/>
</dbReference>
<dbReference type="GO" id="GO:0003918">
    <property type="term" value="F:DNA topoisomerase type II (double strand cut, ATP-hydrolyzing) activity"/>
    <property type="evidence" value="ECO:0007669"/>
    <property type="project" value="UniProtKB-UniRule"/>
</dbReference>
<dbReference type="GO" id="GO:0006265">
    <property type="term" value="P:DNA topological change"/>
    <property type="evidence" value="ECO:0007669"/>
    <property type="project" value="UniProtKB-UniRule"/>
</dbReference>
<dbReference type="CDD" id="cd16933">
    <property type="entry name" value="HATPase_TopVIB-like"/>
    <property type="match status" value="1"/>
</dbReference>
<dbReference type="CDD" id="cd00823">
    <property type="entry name" value="TopoIIB_Trans"/>
    <property type="match status" value="1"/>
</dbReference>
<dbReference type="FunFam" id="1.10.8.50:FF:000028">
    <property type="entry name" value="Type 2 DNA topoisomerase 6 subunit B"/>
    <property type="match status" value="1"/>
</dbReference>
<dbReference type="FunFam" id="3.30.230.10:FF:000202">
    <property type="entry name" value="Type 2 DNA topoisomerase 6 subunit B"/>
    <property type="match status" value="1"/>
</dbReference>
<dbReference type="FunFam" id="3.30.565.10:FF:000062">
    <property type="entry name" value="Type 2 DNA topoisomerase 6 subunit B"/>
    <property type="match status" value="1"/>
</dbReference>
<dbReference type="Gene3D" id="1.10.8.50">
    <property type="match status" value="1"/>
</dbReference>
<dbReference type="Gene3D" id="3.30.230.10">
    <property type="match status" value="1"/>
</dbReference>
<dbReference type="Gene3D" id="3.30.565.10">
    <property type="entry name" value="Histidine kinase-like ATPase, C-terminal domain"/>
    <property type="match status" value="1"/>
</dbReference>
<dbReference type="HAMAP" id="MF_00322">
    <property type="entry name" value="Top6B"/>
    <property type="match status" value="1"/>
</dbReference>
<dbReference type="InterPro" id="IPR036890">
    <property type="entry name" value="HATPase_C_sf"/>
</dbReference>
<dbReference type="InterPro" id="IPR020568">
    <property type="entry name" value="Ribosomal_Su5_D2-typ_SF"/>
</dbReference>
<dbReference type="InterPro" id="IPR014721">
    <property type="entry name" value="Ribsml_uS5_D2-typ_fold_subgr"/>
</dbReference>
<dbReference type="InterPro" id="IPR005734">
    <property type="entry name" value="TopoVI_B"/>
</dbReference>
<dbReference type="InterPro" id="IPR015320">
    <property type="entry name" value="TopoVI_B_transducer"/>
</dbReference>
<dbReference type="NCBIfam" id="NF003218">
    <property type="entry name" value="PRK04184.1"/>
    <property type="match status" value="1"/>
</dbReference>
<dbReference type="NCBIfam" id="TIGR01052">
    <property type="entry name" value="top6b"/>
    <property type="match status" value="1"/>
</dbReference>
<dbReference type="PANTHER" id="PTHR48444">
    <property type="entry name" value="DNA TOPOISOMERASE 6 SUBUNIT B"/>
    <property type="match status" value="1"/>
</dbReference>
<dbReference type="PANTHER" id="PTHR48444:SF1">
    <property type="entry name" value="DNA TOPOISOMERASE 6 SUBUNIT B"/>
    <property type="match status" value="1"/>
</dbReference>
<dbReference type="Pfam" id="PF02518">
    <property type="entry name" value="HATPase_c"/>
    <property type="match status" value="1"/>
</dbReference>
<dbReference type="Pfam" id="PF09239">
    <property type="entry name" value="Topo-VIb_trans"/>
    <property type="match status" value="1"/>
</dbReference>
<dbReference type="PIRSF" id="PIRSF006553">
    <property type="entry name" value="TopoVI_B"/>
    <property type="match status" value="1"/>
</dbReference>
<dbReference type="SMART" id="SM00387">
    <property type="entry name" value="HATPase_c"/>
    <property type="match status" value="1"/>
</dbReference>
<dbReference type="SUPFAM" id="SSF55874">
    <property type="entry name" value="ATPase domain of HSP90 chaperone/DNA topoisomerase II/histidine kinase"/>
    <property type="match status" value="1"/>
</dbReference>
<dbReference type="SUPFAM" id="SSF54211">
    <property type="entry name" value="Ribosomal protein S5 domain 2-like"/>
    <property type="match status" value="1"/>
</dbReference>
<name>TOP6B_THEGJ</name>
<organism>
    <name type="scientific">Thermococcus gammatolerans (strain DSM 15229 / JCM 11827 / EJ3)</name>
    <dbReference type="NCBI Taxonomy" id="593117"/>
    <lineage>
        <taxon>Archaea</taxon>
        <taxon>Methanobacteriati</taxon>
        <taxon>Methanobacteriota</taxon>
        <taxon>Thermococci</taxon>
        <taxon>Thermococcales</taxon>
        <taxon>Thermococcaceae</taxon>
        <taxon>Thermococcus</taxon>
    </lineage>
</organism>
<comment type="function">
    <text evidence="1">Relaxes both positive and negative superturns and exhibits a strong decatenase activity.</text>
</comment>
<comment type="catalytic activity">
    <reaction evidence="1">
        <text>ATP-dependent breakage, passage and rejoining of double-stranded DNA.</text>
        <dbReference type="EC" id="5.6.2.2"/>
    </reaction>
</comment>
<comment type="subunit">
    <text evidence="1">Homodimer. Heterotetramer of two Top6A and two Top6B chains.</text>
</comment>
<comment type="similarity">
    <text evidence="1">Belongs to the TOP6B family.</text>
</comment>
<accession>C5A6R5</accession>
<keyword id="KW-0067">ATP-binding</keyword>
<keyword id="KW-0238">DNA-binding</keyword>
<keyword id="KW-0413">Isomerase</keyword>
<keyword id="KW-0547">Nucleotide-binding</keyword>
<keyword id="KW-1185">Reference proteome</keyword>
<keyword id="KW-0799">Topoisomerase</keyword>
<gene>
    <name evidence="1" type="primary">top6B</name>
    <name type="ordered locus">TGAM_1425</name>
</gene>
<evidence type="ECO:0000255" key="1">
    <source>
        <dbReference type="HAMAP-Rule" id="MF_00322"/>
    </source>
</evidence>
<feature type="chain" id="PRO_1000205148" description="Type 2 DNA topoisomerase 6 subunit B">
    <location>
        <begin position="1"/>
        <end position="561"/>
    </location>
</feature>
<feature type="binding site" evidence="1">
    <location>
        <position position="46"/>
    </location>
    <ligand>
        <name>ATP</name>
        <dbReference type="ChEBI" id="CHEBI:30616"/>
    </ligand>
</feature>
<feature type="binding site" evidence="1">
    <location>
        <position position="78"/>
    </location>
    <ligand>
        <name>ATP</name>
        <dbReference type="ChEBI" id="CHEBI:30616"/>
    </ligand>
</feature>
<feature type="binding site" evidence="1">
    <location>
        <begin position="99"/>
        <end position="100"/>
    </location>
    <ligand>
        <name>ATP</name>
        <dbReference type="ChEBI" id="CHEBI:30616"/>
    </ligand>
</feature>
<feature type="binding site" evidence="1">
    <location>
        <begin position="109"/>
        <end position="116"/>
    </location>
    <ligand>
        <name>ATP</name>
        <dbReference type="ChEBI" id="CHEBI:30616"/>
    </ligand>
</feature>
<feature type="binding site" evidence="1">
    <location>
        <position position="471"/>
    </location>
    <ligand>
        <name>ATP</name>
        <dbReference type="ChEBI" id="CHEBI:30616"/>
    </ligand>
</feature>
<proteinExistence type="inferred from homology"/>
<protein>
    <recommendedName>
        <fullName evidence="1">Type 2 DNA topoisomerase 6 subunit B</fullName>
        <ecNumber evidence="1">5.6.2.2</ecNumber>
    </recommendedName>
    <alternativeName>
        <fullName evidence="1">Type II DNA topoisomerase VI subunit B</fullName>
        <shortName evidence="1">TopoVI-B</shortName>
    </alternativeName>
</protein>
<reference key="1">
    <citation type="journal article" date="2007" name="Genome Biol.">
        <title>Genome analysis and genome-wide proteomics of Thermococcus gammatolerans, the most radioresistant organism known amongst the Archaea.</title>
        <authorList>
            <person name="Zivanovic Y."/>
            <person name="Armengaud J."/>
            <person name="Lagorce A."/>
            <person name="Leplat C."/>
            <person name="Guerin P."/>
            <person name="Dutertre M."/>
            <person name="Anthouard V."/>
            <person name="Forterre P."/>
            <person name="Wincker P."/>
            <person name="Confalonieri F."/>
        </authorList>
    </citation>
    <scope>NUCLEOTIDE SEQUENCE [LARGE SCALE GENOMIC DNA]</scope>
    <source>
        <strain>DSM 15229 / JCM 11827 / EJ3</strain>
    </source>
</reference>